<comment type="function">
    <text evidence="1">Transcriptional factor involved in regulation of membrane lipid biosynthesis by repressing genes involved in fatty acid and phospholipid metabolism.</text>
</comment>
<comment type="similarity">
    <text evidence="1">Belongs to the FapR family.</text>
</comment>
<gene>
    <name evidence="1" type="primary">fapR</name>
    <name type="ordered locus">BLi01809</name>
    <name type="ordered locus">BL02312</name>
</gene>
<organism>
    <name type="scientific">Bacillus licheniformis (strain ATCC 14580 / DSM 13 / JCM 2505 / CCUG 7422 / NBRC 12200 / NCIMB 9375 / NCTC 10341 / NRRL NRS-1264 / Gibson 46)</name>
    <dbReference type="NCBI Taxonomy" id="279010"/>
    <lineage>
        <taxon>Bacteria</taxon>
        <taxon>Bacillati</taxon>
        <taxon>Bacillota</taxon>
        <taxon>Bacilli</taxon>
        <taxon>Bacillales</taxon>
        <taxon>Bacillaceae</taxon>
        <taxon>Bacillus</taxon>
    </lineage>
</organism>
<dbReference type="EMBL" id="AE017333">
    <property type="protein sequence ID" value="AAU40704.1"/>
    <property type="molecule type" value="Genomic_DNA"/>
</dbReference>
<dbReference type="EMBL" id="CP000002">
    <property type="protein sequence ID" value="AAU23344.1"/>
    <property type="molecule type" value="Genomic_DNA"/>
</dbReference>
<dbReference type="RefSeq" id="WP_003181698.1">
    <property type="nucleotide sequence ID" value="NC_006322.1"/>
</dbReference>
<dbReference type="SMR" id="Q65JR0"/>
<dbReference type="STRING" id="279010.BL02312"/>
<dbReference type="GeneID" id="92861598"/>
<dbReference type="KEGG" id="bld:BLi01809"/>
<dbReference type="KEGG" id="bli:BL02312"/>
<dbReference type="eggNOG" id="COG1349">
    <property type="taxonomic scope" value="Bacteria"/>
</dbReference>
<dbReference type="HOGENOM" id="CLU_095708_0_0_9"/>
<dbReference type="Proteomes" id="UP000000606">
    <property type="component" value="Chromosome"/>
</dbReference>
<dbReference type="GO" id="GO:0003677">
    <property type="term" value="F:DNA binding"/>
    <property type="evidence" value="ECO:0007669"/>
    <property type="project" value="UniProtKB-KW"/>
</dbReference>
<dbReference type="GO" id="GO:0003700">
    <property type="term" value="F:DNA-binding transcription factor activity"/>
    <property type="evidence" value="ECO:0007669"/>
    <property type="project" value="UniProtKB-UniRule"/>
</dbReference>
<dbReference type="GO" id="GO:0006633">
    <property type="term" value="P:fatty acid biosynthetic process"/>
    <property type="evidence" value="ECO:0007669"/>
    <property type="project" value="UniProtKB-KW"/>
</dbReference>
<dbReference type="GO" id="GO:0045892">
    <property type="term" value="P:negative regulation of DNA-templated transcription"/>
    <property type="evidence" value="ECO:0007669"/>
    <property type="project" value="UniProtKB-UniRule"/>
</dbReference>
<dbReference type="GO" id="GO:0045717">
    <property type="term" value="P:negative regulation of fatty acid biosynthetic process"/>
    <property type="evidence" value="ECO:0007669"/>
    <property type="project" value="UniProtKB-UniRule"/>
</dbReference>
<dbReference type="CDD" id="cd03440">
    <property type="entry name" value="hot_dog"/>
    <property type="match status" value="1"/>
</dbReference>
<dbReference type="Gene3D" id="3.10.129.10">
    <property type="entry name" value="Hotdog Thioesterase"/>
    <property type="match status" value="1"/>
</dbReference>
<dbReference type="Gene3D" id="1.10.10.10">
    <property type="entry name" value="Winged helix-like DNA-binding domain superfamily/Winged helix DNA-binding domain"/>
    <property type="match status" value="1"/>
</dbReference>
<dbReference type="HAMAP" id="MF_01814">
    <property type="entry name" value="Transcrip_fact_FapR"/>
    <property type="match status" value="1"/>
</dbReference>
<dbReference type="InterPro" id="IPR029069">
    <property type="entry name" value="HotDog_dom_sf"/>
</dbReference>
<dbReference type="InterPro" id="IPR006683">
    <property type="entry name" value="Thioestr_dom"/>
</dbReference>
<dbReference type="InterPro" id="IPR017275">
    <property type="entry name" value="Transcription_factor_FapR"/>
</dbReference>
<dbReference type="InterPro" id="IPR036388">
    <property type="entry name" value="WH-like_DNA-bd_sf"/>
</dbReference>
<dbReference type="InterPro" id="IPR036390">
    <property type="entry name" value="WH_DNA-bd_sf"/>
</dbReference>
<dbReference type="NCBIfam" id="NF003359">
    <property type="entry name" value="PRK04424.1"/>
    <property type="match status" value="1"/>
</dbReference>
<dbReference type="Pfam" id="PF03061">
    <property type="entry name" value="4HBT"/>
    <property type="match status" value="1"/>
</dbReference>
<dbReference type="PIRSF" id="PIRSF037733">
    <property type="entry name" value="Transcription_factor_FapR"/>
    <property type="match status" value="1"/>
</dbReference>
<dbReference type="SUPFAM" id="SSF54637">
    <property type="entry name" value="Thioesterase/thiol ester dehydrase-isomerase"/>
    <property type="match status" value="1"/>
</dbReference>
<dbReference type="SUPFAM" id="SSF46785">
    <property type="entry name" value="Winged helix' DNA-binding domain"/>
    <property type="match status" value="1"/>
</dbReference>
<accession>Q65JR0</accession>
<accession>Q62V65</accession>
<sequence length="188" mass="21623">MRKSKRERQELLQQTIRTTPFITDEELAEKFNVSIQTIRLDRLELSIPELRERIKSVAEKSLEDEVKSLPLDEVIGEIIDLELDEHAISILEIRREHVFSRNQIARGHHLFAQANSLAVALIDDELALTAKADIRFTRQVKQGERVVAKAKVVKLDKDKGRTVVEVNSYVAEEPVFSGEFVMYRSKQS</sequence>
<feature type="chain" id="PRO_0000172818" description="Transcription factor FapR">
    <location>
        <begin position="1"/>
        <end position="188"/>
    </location>
</feature>
<proteinExistence type="inferred from homology"/>
<protein>
    <recommendedName>
        <fullName evidence="1">Transcription factor FapR</fullName>
    </recommendedName>
    <alternativeName>
        <fullName evidence="1">Fatty acid and phospholipid biosynthesis regulator</fullName>
    </alternativeName>
</protein>
<evidence type="ECO:0000255" key="1">
    <source>
        <dbReference type="HAMAP-Rule" id="MF_01814"/>
    </source>
</evidence>
<keyword id="KW-0238">DNA-binding</keyword>
<keyword id="KW-0275">Fatty acid biosynthesis</keyword>
<keyword id="KW-0276">Fatty acid metabolism</keyword>
<keyword id="KW-0444">Lipid biosynthesis</keyword>
<keyword id="KW-0443">Lipid metabolism</keyword>
<keyword id="KW-1185">Reference proteome</keyword>
<keyword id="KW-0678">Repressor</keyword>
<keyword id="KW-0804">Transcription</keyword>
<keyword id="KW-0805">Transcription regulation</keyword>
<name>FAPR_BACLD</name>
<reference key="1">
    <citation type="journal article" date="2004" name="J. Mol. Microbiol. Biotechnol.">
        <title>The complete genome sequence of Bacillus licheniformis DSM13, an organism with great industrial potential.</title>
        <authorList>
            <person name="Veith B."/>
            <person name="Herzberg C."/>
            <person name="Steckel S."/>
            <person name="Feesche J."/>
            <person name="Maurer K.H."/>
            <person name="Ehrenreich P."/>
            <person name="Baeumer S."/>
            <person name="Henne A."/>
            <person name="Liesegang H."/>
            <person name="Merkl R."/>
            <person name="Ehrenreich A."/>
            <person name="Gottschalk G."/>
        </authorList>
    </citation>
    <scope>NUCLEOTIDE SEQUENCE [LARGE SCALE GENOMIC DNA]</scope>
    <source>
        <strain>ATCC 14580 / DSM 13 / JCM 2505 / CCUG 7422 / NBRC 12200 / NCIMB 9375 / NCTC 10341 / NRRL NRS-1264 / Gibson 46</strain>
    </source>
</reference>
<reference key="2">
    <citation type="journal article" date="2004" name="Genome Biol.">
        <title>Complete genome sequence of the industrial bacterium Bacillus licheniformis and comparisons with closely related Bacillus species.</title>
        <authorList>
            <person name="Rey M.W."/>
            <person name="Ramaiya P."/>
            <person name="Nelson B.A."/>
            <person name="Brody-Karpin S.D."/>
            <person name="Zaretsky E.J."/>
            <person name="Tang M."/>
            <person name="Lopez de Leon A."/>
            <person name="Xiang H."/>
            <person name="Gusti V."/>
            <person name="Clausen I.G."/>
            <person name="Olsen P.B."/>
            <person name="Rasmussen M.D."/>
            <person name="Andersen J.T."/>
            <person name="Joergensen P.L."/>
            <person name="Larsen T.S."/>
            <person name="Sorokin A."/>
            <person name="Bolotin A."/>
            <person name="Lapidus A."/>
            <person name="Galleron N."/>
            <person name="Ehrlich S.D."/>
            <person name="Berka R.M."/>
        </authorList>
    </citation>
    <scope>NUCLEOTIDE SEQUENCE [LARGE SCALE GENOMIC DNA]</scope>
    <source>
        <strain>ATCC 14580 / DSM 13 / JCM 2505 / CCUG 7422 / NBRC 12200 / NCIMB 9375 / NCTC 10341 / NRRL NRS-1264 / Gibson 46</strain>
    </source>
</reference>